<comment type="function">
    <text evidence="2 3">Nitrilase that hydrolyzes preferentially 4-cyanopyridine.</text>
</comment>
<comment type="catalytic activity">
    <reaction evidence="2 3">
        <text>a nitrile + 2 H2O = a carboxylate + NH4(+)</text>
        <dbReference type="Rhea" id="RHEA:21724"/>
        <dbReference type="ChEBI" id="CHEBI:15377"/>
        <dbReference type="ChEBI" id="CHEBI:18379"/>
        <dbReference type="ChEBI" id="CHEBI:28938"/>
        <dbReference type="ChEBI" id="CHEBI:29067"/>
        <dbReference type="EC" id="3.5.5.1"/>
    </reaction>
</comment>
<comment type="biophysicochemical properties">
    <kinetics>
        <KM evidence="2">7.9 mM for benzonitrile</KM>
        <KM evidence="2">11.1 mM for 3-chlorobenzonitrile</KM>
        <KM evidence="2">2.6 mM for 4-chlorobenzonitrile</KM>
        <KM evidence="2">11.7 mM for 2-cyanopyridine</KM>
        <KM evidence="2">34.4 mM for 3-cyanopyridine</KM>
        <KM evidence="2">15.4 mM for 4-cyanopyridine</KM>
        <KM evidence="2">9.1 mM for phenylacetonitrile</KM>
        <Vmax evidence="2">0.16 umol/min/mg enzyme toward benzonitrile</Vmax>
        <Vmax evidence="2">1.9 umol/min/mg enzyme toward 3-chlorobenzonitrile</Vmax>
        <Vmax evidence="2">0.13 umol/min/mg enzyme toward 4-chlorobenzonitrile</Vmax>
        <Vmax evidence="2">0.46 umol/min/mg enzyme toward 2-cyanopyridine</Vmax>
        <Vmax evidence="2">0.21 umol/min/mg enzyme toward 3-cyanopyridine</Vmax>
        <Vmax evidence="2">7.3 umol/min/mg enzyme toward 4-cyanopyridine</Vmax>
        <Vmax evidence="2">0.1 umol/min/mg enzyme toward phenylacetonitrile</Vmax>
    </kinetics>
    <phDependence>
        <text evidence="2">Optimum pH is 6.5-8.5.</text>
    </phDependence>
    <temperatureDependence>
        <text evidence="2">Optimum temperature is 30-35 degrees Celsius.</text>
    </temperatureDependence>
</comment>
<comment type="similarity">
    <text evidence="6">Belongs to the carbon-nitrogen hydrolase superfamily. Nitrilase family.</text>
</comment>
<keyword id="KW-0378">Hydrolase</keyword>
<keyword id="KW-1185">Reference proteome</keyword>
<evidence type="ECO:0000255" key="1">
    <source>
        <dbReference type="PROSITE-ProRule" id="PRU00054"/>
    </source>
</evidence>
<evidence type="ECO:0000269" key="2">
    <source>
    </source>
</evidence>
<evidence type="ECO:0000269" key="3">
    <source>
    </source>
</evidence>
<evidence type="ECO:0000303" key="4">
    <source>
    </source>
</evidence>
<evidence type="ECO:0000303" key="5">
    <source>
    </source>
</evidence>
<evidence type="ECO:0000305" key="6"/>
<evidence type="ECO:0000312" key="7">
    <source>
        <dbReference type="Proteomes" id="UP000001294"/>
    </source>
</evidence>
<gene>
    <name type="ORF">PMAA_032480</name>
</gene>
<reference key="1">
    <citation type="journal article" date="2015" name="Genome Announc.">
        <title>Genome sequence of the AIDS-associated pathogen Penicillium marneffei (ATCC18224) and its near taxonomic relative Talaromyces stipitatus (ATCC10500).</title>
        <authorList>
            <person name="Nierman W.C."/>
            <person name="Fedorova-Abrams N.D."/>
            <person name="Andrianopoulos A."/>
        </authorList>
    </citation>
    <scope>NUCLEOTIDE SEQUENCE [LARGE SCALE GENOMIC DNA]</scope>
    <source>
        <strain evidence="7">ATCC 18224 / CBS 334.59 / QM 7333</strain>
    </source>
</reference>
<reference key="2">
    <citation type="journal article" date="2012" name="Appl. Microbiol. Biotechnol.">
        <title>Purification and characterization of heterologously expressed nitrilases from filamentous fungi.</title>
        <authorList>
            <person name="Petrickova A."/>
            <person name="Vesela A.B."/>
            <person name="Kaplan O."/>
            <person name="Kubac D."/>
            <person name="Uhnakova B."/>
            <person name="Malandra A."/>
            <person name="Felsberg J."/>
            <person name="Rinagelova A."/>
            <person name="Weyrauch P."/>
            <person name="Kren V."/>
            <person name="Bezouska K."/>
            <person name="Martinkova L."/>
        </authorList>
    </citation>
    <scope>FUNCTION</scope>
    <scope>CATALYTIC ACTIVITY</scope>
    <scope>BIOPHYSICOCHEMICAL PROPERTIES</scope>
</reference>
<reference key="3">
    <citation type="journal article" date="2013" name="Mol. Biotechnol.">
        <title>A comparative study of nitrilases identified by genome mining.</title>
        <authorList>
            <person name="Kaplan O."/>
            <person name="Vesela A.B."/>
            <person name="Petrickova A."/>
            <person name="Pasquarelli F."/>
            <person name="Picmanova M."/>
            <person name="Rinagelova A."/>
            <person name="Bhalla T.C."/>
            <person name="Patek M."/>
            <person name="Martinkova L."/>
        </authorList>
    </citation>
    <scope>FUNCTION</scope>
    <scope>CATALYTIC ACTIVITY</scope>
</reference>
<sequence>MSKIVRVGAVQSEPVWLDLEGSVDKTISLIEKAAADGVNVLGFPEVWIPGYPWSMWTSAVINNSHIIHDYMNNSMRKDSPQMKRIQAAVKEAGMVVVLGYSERDGASLYMAQSFIDPSGEIVHHRRKIKPTHIERTIWGEGQAESLTCVIDSPFGKVGGLNCWEHLQPLLRYYEYSQGVQIHIASWPAEFEMPDPKKIAWLYHETGEASYRASQFFAIEGQAFVLVASQILTEANVERNNLTGNPVTKTPGGGFSMIFGPDGKPLCEPVDAGAEAILTADIDLRDIDKPKAFIDVVGHYARPDLLSLLVNPTVDKHVTTMKK</sequence>
<protein>
    <recommendedName>
        <fullName evidence="4 5">Nitrilase</fullName>
        <ecNumber evidence="2 3">3.5.5.1</ecNumber>
    </recommendedName>
    <alternativeName>
        <fullName evidence="5">NitPm</fullName>
    </alternativeName>
</protein>
<dbReference type="EC" id="3.5.5.1" evidence="2 3"/>
<dbReference type="EMBL" id="DS995899">
    <property type="protein sequence ID" value="EEA28436.1"/>
    <property type="molecule type" value="Genomic_DNA"/>
</dbReference>
<dbReference type="RefSeq" id="XP_002144951.1">
    <property type="nucleotide sequence ID" value="XM_002144915.1"/>
</dbReference>
<dbReference type="SMR" id="B6Q5I3"/>
<dbReference type="STRING" id="441960.B6Q5I3"/>
<dbReference type="VEuPathDB" id="FungiDB:PMAA_032480"/>
<dbReference type="HOGENOM" id="CLU_030130_6_0_1"/>
<dbReference type="OrthoDB" id="110at28568"/>
<dbReference type="PhylomeDB" id="B6Q5I3"/>
<dbReference type="BRENDA" id="3.5.5.1">
    <property type="organism ID" value="9894"/>
</dbReference>
<dbReference type="Proteomes" id="UP000001294">
    <property type="component" value="Unassembled WGS sequence"/>
</dbReference>
<dbReference type="GO" id="GO:0016836">
    <property type="term" value="F:hydro-lyase activity"/>
    <property type="evidence" value="ECO:0007669"/>
    <property type="project" value="UniProtKB-ARBA"/>
</dbReference>
<dbReference type="GO" id="GO:0000257">
    <property type="term" value="F:nitrilase activity"/>
    <property type="evidence" value="ECO:0007669"/>
    <property type="project" value="UniProtKB-EC"/>
</dbReference>
<dbReference type="CDD" id="cd07564">
    <property type="entry name" value="nitrilases_CHs"/>
    <property type="match status" value="1"/>
</dbReference>
<dbReference type="FunFam" id="3.60.110.10:FF:000011">
    <property type="entry name" value="Cyanide hydratase"/>
    <property type="match status" value="1"/>
</dbReference>
<dbReference type="Gene3D" id="3.60.110.10">
    <property type="entry name" value="Carbon-nitrogen hydrolase"/>
    <property type="match status" value="1"/>
</dbReference>
<dbReference type="InterPro" id="IPR003010">
    <property type="entry name" value="C-N_Hydrolase"/>
</dbReference>
<dbReference type="InterPro" id="IPR036526">
    <property type="entry name" value="C-N_Hydrolase_sf"/>
</dbReference>
<dbReference type="InterPro" id="IPR000132">
    <property type="entry name" value="Nitrilase/CN_hydratase_CS"/>
</dbReference>
<dbReference type="InterPro" id="IPR044149">
    <property type="entry name" value="Nitrilases_CHs"/>
</dbReference>
<dbReference type="PANTHER" id="PTHR46044:SF14">
    <property type="entry name" value="ARYLACETONITRILASE"/>
    <property type="match status" value="1"/>
</dbReference>
<dbReference type="PANTHER" id="PTHR46044">
    <property type="entry name" value="NITRILASE"/>
    <property type="match status" value="1"/>
</dbReference>
<dbReference type="Pfam" id="PF00795">
    <property type="entry name" value="CN_hydrolase"/>
    <property type="match status" value="1"/>
</dbReference>
<dbReference type="SUPFAM" id="SSF56317">
    <property type="entry name" value="Carbon-nitrogen hydrolase"/>
    <property type="match status" value="1"/>
</dbReference>
<dbReference type="PROSITE" id="PS50263">
    <property type="entry name" value="CN_HYDROLASE"/>
    <property type="match status" value="1"/>
</dbReference>
<dbReference type="PROSITE" id="PS00920">
    <property type="entry name" value="NITRIL_CHT_1"/>
    <property type="match status" value="1"/>
</dbReference>
<dbReference type="PROSITE" id="PS00921">
    <property type="entry name" value="NITRIL_CHT_2"/>
    <property type="match status" value="1"/>
</dbReference>
<accession>B6Q5I3</accession>
<name>NIT_TALMQ</name>
<organism>
    <name type="scientific">Talaromyces marneffei (strain ATCC 18224 / CBS 334.59 / QM 7333)</name>
    <name type="common">Penicillium marneffei</name>
    <dbReference type="NCBI Taxonomy" id="441960"/>
    <lineage>
        <taxon>Eukaryota</taxon>
        <taxon>Fungi</taxon>
        <taxon>Dikarya</taxon>
        <taxon>Ascomycota</taxon>
        <taxon>Pezizomycotina</taxon>
        <taxon>Eurotiomycetes</taxon>
        <taxon>Eurotiomycetidae</taxon>
        <taxon>Eurotiales</taxon>
        <taxon>Trichocomaceae</taxon>
        <taxon>Talaromyces</taxon>
        <taxon>Talaromyces sect. Talaromyces</taxon>
    </lineage>
</organism>
<proteinExistence type="evidence at protein level"/>
<feature type="chain" id="PRO_0000432178" description="Nitrilase">
    <location>
        <begin position="1"/>
        <end position="322"/>
    </location>
</feature>
<feature type="domain" description="CN hydrolase" evidence="1">
    <location>
        <begin position="5"/>
        <end position="283"/>
    </location>
</feature>
<feature type="active site" description="Proton acceptor" evidence="1">
    <location>
        <position position="45"/>
    </location>
</feature>
<feature type="active site" evidence="1">
    <location>
        <position position="127"/>
    </location>
</feature>
<feature type="active site" description="Nucleophile" evidence="1">
    <location>
        <position position="162"/>
    </location>
</feature>